<accession>A2ZMR9</accession>
<reference key="1">
    <citation type="journal article" date="2005" name="PLoS Biol.">
        <title>The genomes of Oryza sativa: a history of duplications.</title>
        <authorList>
            <person name="Yu J."/>
            <person name="Wang J."/>
            <person name="Lin W."/>
            <person name="Li S."/>
            <person name="Li H."/>
            <person name="Zhou J."/>
            <person name="Ni P."/>
            <person name="Dong W."/>
            <person name="Hu S."/>
            <person name="Zeng C."/>
            <person name="Zhang J."/>
            <person name="Zhang Y."/>
            <person name="Li R."/>
            <person name="Xu Z."/>
            <person name="Li S."/>
            <person name="Li X."/>
            <person name="Zheng H."/>
            <person name="Cong L."/>
            <person name="Lin L."/>
            <person name="Yin J."/>
            <person name="Geng J."/>
            <person name="Li G."/>
            <person name="Shi J."/>
            <person name="Liu J."/>
            <person name="Lv H."/>
            <person name="Li J."/>
            <person name="Wang J."/>
            <person name="Deng Y."/>
            <person name="Ran L."/>
            <person name="Shi X."/>
            <person name="Wang X."/>
            <person name="Wu Q."/>
            <person name="Li C."/>
            <person name="Ren X."/>
            <person name="Wang J."/>
            <person name="Wang X."/>
            <person name="Li D."/>
            <person name="Liu D."/>
            <person name="Zhang X."/>
            <person name="Ji Z."/>
            <person name="Zhao W."/>
            <person name="Sun Y."/>
            <person name="Zhang Z."/>
            <person name="Bao J."/>
            <person name="Han Y."/>
            <person name="Dong L."/>
            <person name="Ji J."/>
            <person name="Chen P."/>
            <person name="Wu S."/>
            <person name="Liu J."/>
            <person name="Xiao Y."/>
            <person name="Bu D."/>
            <person name="Tan J."/>
            <person name="Yang L."/>
            <person name="Ye C."/>
            <person name="Zhang J."/>
            <person name="Xu J."/>
            <person name="Zhou Y."/>
            <person name="Yu Y."/>
            <person name="Zhang B."/>
            <person name="Zhuang S."/>
            <person name="Wei H."/>
            <person name="Liu B."/>
            <person name="Lei M."/>
            <person name="Yu H."/>
            <person name="Li Y."/>
            <person name="Xu H."/>
            <person name="Wei S."/>
            <person name="He X."/>
            <person name="Fang L."/>
            <person name="Zhang Z."/>
            <person name="Zhang Y."/>
            <person name="Huang X."/>
            <person name="Su Z."/>
            <person name="Tong W."/>
            <person name="Li J."/>
            <person name="Tong Z."/>
            <person name="Li S."/>
            <person name="Ye J."/>
            <person name="Wang L."/>
            <person name="Fang L."/>
            <person name="Lei T."/>
            <person name="Chen C.-S."/>
            <person name="Chen H.-C."/>
            <person name="Xu Z."/>
            <person name="Li H."/>
            <person name="Huang H."/>
            <person name="Zhang F."/>
            <person name="Xu H."/>
            <person name="Li N."/>
            <person name="Zhao C."/>
            <person name="Li S."/>
            <person name="Dong L."/>
            <person name="Huang Y."/>
            <person name="Li L."/>
            <person name="Xi Y."/>
            <person name="Qi Q."/>
            <person name="Li W."/>
            <person name="Zhang B."/>
            <person name="Hu W."/>
            <person name="Zhang Y."/>
            <person name="Tian X."/>
            <person name="Jiao Y."/>
            <person name="Liang X."/>
            <person name="Jin J."/>
            <person name="Gao L."/>
            <person name="Zheng W."/>
            <person name="Hao B."/>
            <person name="Liu S.-M."/>
            <person name="Wang W."/>
            <person name="Yuan L."/>
            <person name="Cao M."/>
            <person name="McDermott J."/>
            <person name="Samudrala R."/>
            <person name="Wang J."/>
            <person name="Wong G.K.-S."/>
            <person name="Yang H."/>
        </authorList>
    </citation>
    <scope>NUCLEOTIDE SEQUENCE [LARGE SCALE GENOMIC DNA]</scope>
    <source>
        <strain>cv. 93-11</strain>
    </source>
</reference>
<reference key="2">
    <citation type="journal article" date="2002" name="Plant J.">
        <title>DNA binding and dimerization specificity and potential targets for the TCP protein family.</title>
        <authorList>
            <person name="Kosugi S."/>
            <person name="Ohashi Y."/>
        </authorList>
    </citation>
    <scope>FUNCTION</scope>
</reference>
<keyword id="KW-0010">Activator</keyword>
<keyword id="KW-0025">Alternative splicing</keyword>
<keyword id="KW-0217">Developmental protein</keyword>
<keyword id="KW-0238">DNA-binding</keyword>
<keyword id="KW-0539">Nucleus</keyword>
<keyword id="KW-1185">Reference proteome</keyword>
<keyword id="KW-0804">Transcription</keyword>
<keyword id="KW-0805">Transcription regulation</keyword>
<feature type="chain" id="PRO_0000330814" description="Transcription factor PCF8">
    <location>
        <begin position="1"/>
        <end position="297"/>
    </location>
</feature>
<feature type="domain" description="TCP" evidence="1">
    <location>
        <begin position="46"/>
        <end position="104"/>
    </location>
</feature>
<feature type="region of interest" description="Disordered" evidence="2">
    <location>
        <begin position="1"/>
        <end position="22"/>
    </location>
</feature>
<feature type="region of interest" description="Disordered" evidence="2">
    <location>
        <begin position="116"/>
        <end position="136"/>
    </location>
</feature>
<feature type="region of interest" description="Disordered" evidence="2">
    <location>
        <begin position="273"/>
        <end position="297"/>
    </location>
</feature>
<feature type="compositionally biased region" description="Basic and acidic residues" evidence="2">
    <location>
        <begin position="282"/>
        <end position="297"/>
    </location>
</feature>
<feature type="splice variant" id="VSP_033119" description="In isoform 2." evidence="4">
    <location>
        <begin position="19"/>
        <end position="107"/>
    </location>
</feature>
<comment type="function">
    <text evidence="3">Transcription activator. Binds the promoter core sequence 5'-GGNCC-3'.</text>
</comment>
<comment type="subunit">
    <text evidence="4">Forms homodimers and heterodimers.</text>
</comment>
<comment type="subcellular location">
    <subcellularLocation>
        <location evidence="4">Nucleus</location>
    </subcellularLocation>
</comment>
<comment type="alternative products">
    <event type="alternative splicing"/>
    <isoform>
        <id>A2ZMR9-1</id>
        <name>1</name>
        <sequence type="displayed"/>
    </isoform>
    <isoform>
        <id>A2ZMR9-2</id>
        <name>2</name>
        <sequence type="described" ref="VSP_033119"/>
    </isoform>
</comment>
<dbReference type="EMBL" id="CM000137">
    <property type="protein sequence ID" value="EAY83903.1"/>
    <property type="molecule type" value="Genomic_DNA"/>
</dbReference>
<dbReference type="SMR" id="A2ZMR9"/>
<dbReference type="STRING" id="39946.A2ZMR9"/>
<dbReference type="EnsemblPlants" id="BGIOSGA037799-TA">
    <molecule id="A2ZMR9-1"/>
    <property type="protein sequence ID" value="BGIOSGA037799-PA"/>
    <property type="gene ID" value="BGIOSGA037799"/>
</dbReference>
<dbReference type="Gramene" id="BGIOSGA037799-TA">
    <molecule id="A2ZMR9-1"/>
    <property type="protein sequence ID" value="BGIOSGA037799-PA"/>
    <property type="gene ID" value="BGIOSGA037799"/>
</dbReference>
<dbReference type="HOGENOM" id="CLU_070702_0_0_1"/>
<dbReference type="OMA" id="HAYNGNA"/>
<dbReference type="Proteomes" id="UP000007015">
    <property type="component" value="Chromosome 12"/>
</dbReference>
<dbReference type="GO" id="GO:0005634">
    <property type="term" value="C:nucleus"/>
    <property type="evidence" value="ECO:0007669"/>
    <property type="project" value="UniProtKB-SubCell"/>
</dbReference>
<dbReference type="GO" id="GO:0003700">
    <property type="term" value="F:DNA-binding transcription factor activity"/>
    <property type="evidence" value="ECO:0007669"/>
    <property type="project" value="InterPro"/>
</dbReference>
<dbReference type="GO" id="GO:0043565">
    <property type="term" value="F:sequence-specific DNA binding"/>
    <property type="evidence" value="ECO:0007669"/>
    <property type="project" value="TreeGrafter"/>
</dbReference>
<dbReference type="GO" id="GO:2000032">
    <property type="term" value="P:regulation of secondary shoot formation"/>
    <property type="evidence" value="ECO:0007669"/>
    <property type="project" value="TreeGrafter"/>
</dbReference>
<dbReference type="InterPro" id="IPR017887">
    <property type="entry name" value="TF_TCP_subgr"/>
</dbReference>
<dbReference type="InterPro" id="IPR005333">
    <property type="entry name" value="Transcription_factor_TCP"/>
</dbReference>
<dbReference type="PANTHER" id="PTHR31072:SF23">
    <property type="entry name" value="TRANSCRIPTION FACTOR PCF8"/>
    <property type="match status" value="1"/>
</dbReference>
<dbReference type="PANTHER" id="PTHR31072">
    <property type="entry name" value="TRANSCRIPTION FACTOR TCP4-RELATED"/>
    <property type="match status" value="1"/>
</dbReference>
<dbReference type="Pfam" id="PF03634">
    <property type="entry name" value="TCP"/>
    <property type="match status" value="1"/>
</dbReference>
<dbReference type="PROSITE" id="PS51369">
    <property type="entry name" value="TCP"/>
    <property type="match status" value="1"/>
</dbReference>
<protein>
    <recommendedName>
        <fullName>Transcription factor PCF8</fullName>
    </recommendedName>
</protein>
<name>PCF8_ORYSI</name>
<evidence type="ECO:0000255" key="1">
    <source>
        <dbReference type="PROSITE-ProRule" id="PRU00701"/>
    </source>
</evidence>
<evidence type="ECO:0000256" key="2">
    <source>
        <dbReference type="SAM" id="MobiDB-lite"/>
    </source>
</evidence>
<evidence type="ECO:0000269" key="3">
    <source>
    </source>
</evidence>
<evidence type="ECO:0000305" key="4"/>
<organism>
    <name type="scientific">Oryza sativa subsp. indica</name>
    <name type="common">Rice</name>
    <dbReference type="NCBI Taxonomy" id="39946"/>
    <lineage>
        <taxon>Eukaryota</taxon>
        <taxon>Viridiplantae</taxon>
        <taxon>Streptophyta</taxon>
        <taxon>Embryophyta</taxon>
        <taxon>Tracheophyta</taxon>
        <taxon>Spermatophyta</taxon>
        <taxon>Magnoliopsida</taxon>
        <taxon>Liliopsida</taxon>
        <taxon>Poales</taxon>
        <taxon>Poaceae</taxon>
        <taxon>BOP clade</taxon>
        <taxon>Oryzoideae</taxon>
        <taxon>Oryzeae</taxon>
        <taxon>Oryzinae</taxon>
        <taxon>Oryza</taxon>
        <taxon>Oryza sativa</taxon>
    </lineage>
</organism>
<gene>
    <name type="primary">PCF8</name>
    <name type="ORF">OsI_037862</name>
</gene>
<sequence>MEEVVGGGKERKRPRGALVGVGGGGESAATAAAWRTSRVARAAAGGKDRHSKVVTSRGLRDRRVRLSVPTAIAFYDIQDRLGVDQPSKAIEWLIRAAAAAIDALPSLDCSFALPAAASSPPPPAADDAEVSTSETSKSSVLSLANAPCDNGGGAFAELLHCSNTNGSKPLQQQQQATLAYYAAAQSAHMAAPMSFEVMAMPPHLAFSQEQQQHATVAAFDRGTLQSNASLWPPPPQPPPSQHPFLLQRFAAAPAEVAGLPFFLAGGVGGAAAAAPAATTNGGERRLQLWDFKEERKT</sequence>
<proteinExistence type="predicted"/>